<protein>
    <recommendedName>
        <fullName>Uncharacterized RNA methyltransferase BH0897</fullName>
        <ecNumber>2.1.1.-</ecNumber>
    </recommendedName>
</protein>
<reference key="1">
    <citation type="journal article" date="2000" name="Nucleic Acids Res.">
        <title>Complete genome sequence of the alkaliphilic bacterium Bacillus halodurans and genomic sequence comparison with Bacillus subtilis.</title>
        <authorList>
            <person name="Takami H."/>
            <person name="Nakasone K."/>
            <person name="Takaki Y."/>
            <person name="Maeno G."/>
            <person name="Sasaki R."/>
            <person name="Masui N."/>
            <person name="Fuji F."/>
            <person name="Hirama C."/>
            <person name="Nakamura Y."/>
            <person name="Ogasawara N."/>
            <person name="Kuhara S."/>
            <person name="Horikoshi K."/>
        </authorList>
    </citation>
    <scope>NUCLEOTIDE SEQUENCE [LARGE SCALE GENOMIC DNA]</scope>
    <source>
        <strain>ATCC BAA-125 / DSM 18197 / FERM 7344 / JCM 9153 / C-125</strain>
    </source>
</reference>
<comment type="similarity">
    <text evidence="3">Belongs to the class I-like SAM-binding methyltransferase superfamily. RNA M5U methyltransferase family.</text>
</comment>
<accession>Q9KEF5</accession>
<proteinExistence type="inferred from homology"/>
<name>Y897_HALH5</name>
<feature type="chain" id="PRO_0000161952" description="Uncharacterized RNA methyltransferase BH0897">
    <location>
        <begin position="1"/>
        <end position="463"/>
    </location>
</feature>
<feature type="domain" description="TRAM" evidence="2">
    <location>
        <begin position="9"/>
        <end position="67"/>
    </location>
</feature>
<feature type="active site" description="Nucleophile" evidence="3">
    <location>
        <position position="418"/>
    </location>
</feature>
<feature type="binding site" evidence="1">
    <location>
        <position position="80"/>
    </location>
    <ligand>
        <name>[4Fe-4S] cluster</name>
        <dbReference type="ChEBI" id="CHEBI:49883"/>
    </ligand>
</feature>
<feature type="binding site" evidence="1">
    <location>
        <position position="86"/>
    </location>
    <ligand>
        <name>[4Fe-4S] cluster</name>
        <dbReference type="ChEBI" id="CHEBI:49883"/>
    </ligand>
</feature>
<feature type="binding site" evidence="1">
    <location>
        <position position="89"/>
    </location>
    <ligand>
        <name>[4Fe-4S] cluster</name>
        <dbReference type="ChEBI" id="CHEBI:49883"/>
    </ligand>
</feature>
<feature type="binding site" evidence="1">
    <location>
        <position position="169"/>
    </location>
    <ligand>
        <name>[4Fe-4S] cluster</name>
        <dbReference type="ChEBI" id="CHEBI:49883"/>
    </ligand>
</feature>
<feature type="binding site" evidence="3">
    <location>
        <position position="293"/>
    </location>
    <ligand>
        <name>S-adenosyl-L-methionine</name>
        <dbReference type="ChEBI" id="CHEBI:59789"/>
    </ligand>
</feature>
<feature type="binding site" evidence="3">
    <location>
        <position position="322"/>
    </location>
    <ligand>
        <name>S-adenosyl-L-methionine</name>
        <dbReference type="ChEBI" id="CHEBI:59789"/>
    </ligand>
</feature>
<feature type="binding site" evidence="3">
    <location>
        <position position="343"/>
    </location>
    <ligand>
        <name>S-adenosyl-L-methionine</name>
        <dbReference type="ChEBI" id="CHEBI:59789"/>
    </ligand>
</feature>
<feature type="binding site" evidence="3">
    <location>
        <position position="391"/>
    </location>
    <ligand>
        <name>S-adenosyl-L-methionine</name>
        <dbReference type="ChEBI" id="CHEBI:59789"/>
    </ligand>
</feature>
<dbReference type="EC" id="2.1.1.-"/>
<dbReference type="EMBL" id="BA000004">
    <property type="protein sequence ID" value="BAB04616.1"/>
    <property type="molecule type" value="Genomic_DNA"/>
</dbReference>
<dbReference type="PIR" id="A83762">
    <property type="entry name" value="A83762"/>
</dbReference>
<dbReference type="RefSeq" id="WP_010897070.1">
    <property type="nucleotide sequence ID" value="NC_002570.2"/>
</dbReference>
<dbReference type="SMR" id="Q9KEF5"/>
<dbReference type="STRING" id="272558.gene:10726771"/>
<dbReference type="GeneID" id="87596441"/>
<dbReference type="KEGG" id="bha:BH0897"/>
<dbReference type="eggNOG" id="COG2265">
    <property type="taxonomic scope" value="Bacteria"/>
</dbReference>
<dbReference type="HOGENOM" id="CLU_014689_7_0_9"/>
<dbReference type="OrthoDB" id="9804590at2"/>
<dbReference type="Proteomes" id="UP000001258">
    <property type="component" value="Chromosome"/>
</dbReference>
<dbReference type="GO" id="GO:0051539">
    <property type="term" value="F:4 iron, 4 sulfur cluster binding"/>
    <property type="evidence" value="ECO:0007669"/>
    <property type="project" value="UniProtKB-KW"/>
</dbReference>
<dbReference type="GO" id="GO:0046872">
    <property type="term" value="F:metal ion binding"/>
    <property type="evidence" value="ECO:0007669"/>
    <property type="project" value="UniProtKB-KW"/>
</dbReference>
<dbReference type="GO" id="GO:0070041">
    <property type="term" value="F:rRNA (uridine-C5-)-methyltransferase activity"/>
    <property type="evidence" value="ECO:0007669"/>
    <property type="project" value="TreeGrafter"/>
</dbReference>
<dbReference type="GO" id="GO:0070475">
    <property type="term" value="P:rRNA base methylation"/>
    <property type="evidence" value="ECO:0007669"/>
    <property type="project" value="TreeGrafter"/>
</dbReference>
<dbReference type="CDD" id="cd02440">
    <property type="entry name" value="AdoMet_MTases"/>
    <property type="match status" value="1"/>
</dbReference>
<dbReference type="FunFam" id="3.40.50.150:FF:000009">
    <property type="entry name" value="23S rRNA (Uracil(1939)-C(5))-methyltransferase RlmD"/>
    <property type="match status" value="1"/>
</dbReference>
<dbReference type="FunFam" id="2.40.50.140:FF:000097">
    <property type="entry name" value="23S rRNA (uracil(1939)-C(5))-methyltransferase RlmD"/>
    <property type="match status" value="1"/>
</dbReference>
<dbReference type="FunFam" id="2.40.50.1070:FF:000003">
    <property type="entry name" value="23S rRNA (Uracil-5-)-methyltransferase RumA"/>
    <property type="match status" value="1"/>
</dbReference>
<dbReference type="Gene3D" id="2.40.50.1070">
    <property type="match status" value="1"/>
</dbReference>
<dbReference type="Gene3D" id="2.40.50.140">
    <property type="entry name" value="Nucleic acid-binding proteins"/>
    <property type="match status" value="1"/>
</dbReference>
<dbReference type="Gene3D" id="3.40.50.150">
    <property type="entry name" value="Vaccinia Virus protein VP39"/>
    <property type="match status" value="1"/>
</dbReference>
<dbReference type="InterPro" id="IPR030390">
    <property type="entry name" value="MeTrfase_TrmA_AS"/>
</dbReference>
<dbReference type="InterPro" id="IPR012340">
    <property type="entry name" value="NA-bd_OB-fold"/>
</dbReference>
<dbReference type="InterPro" id="IPR029063">
    <property type="entry name" value="SAM-dependent_MTases_sf"/>
</dbReference>
<dbReference type="InterPro" id="IPR002792">
    <property type="entry name" value="TRAM_dom"/>
</dbReference>
<dbReference type="InterPro" id="IPR010280">
    <property type="entry name" value="U5_MeTrfase_fam"/>
</dbReference>
<dbReference type="NCBIfam" id="TIGR00479">
    <property type="entry name" value="rumA"/>
    <property type="match status" value="1"/>
</dbReference>
<dbReference type="PANTHER" id="PTHR11061:SF45">
    <property type="match status" value="1"/>
</dbReference>
<dbReference type="PANTHER" id="PTHR11061">
    <property type="entry name" value="RNA M5U METHYLTRANSFERASE"/>
    <property type="match status" value="1"/>
</dbReference>
<dbReference type="Pfam" id="PF01938">
    <property type="entry name" value="TRAM"/>
    <property type="match status" value="1"/>
</dbReference>
<dbReference type="Pfam" id="PF05958">
    <property type="entry name" value="tRNA_U5-meth_tr"/>
    <property type="match status" value="1"/>
</dbReference>
<dbReference type="SUPFAM" id="SSF50249">
    <property type="entry name" value="Nucleic acid-binding proteins"/>
    <property type="match status" value="1"/>
</dbReference>
<dbReference type="SUPFAM" id="SSF53335">
    <property type="entry name" value="S-adenosyl-L-methionine-dependent methyltransferases"/>
    <property type="match status" value="1"/>
</dbReference>
<dbReference type="PROSITE" id="PS51687">
    <property type="entry name" value="SAM_MT_RNA_M5U"/>
    <property type="match status" value="1"/>
</dbReference>
<dbReference type="PROSITE" id="PS50926">
    <property type="entry name" value="TRAM"/>
    <property type="match status" value="1"/>
</dbReference>
<dbReference type="PROSITE" id="PS01230">
    <property type="entry name" value="TRMA_1"/>
    <property type="match status" value="1"/>
</dbReference>
<gene>
    <name type="ordered locus">BH0897</name>
</gene>
<keyword id="KW-0004">4Fe-4S</keyword>
<keyword id="KW-0408">Iron</keyword>
<keyword id="KW-0411">Iron-sulfur</keyword>
<keyword id="KW-0479">Metal-binding</keyword>
<keyword id="KW-0489">Methyltransferase</keyword>
<keyword id="KW-1185">Reference proteome</keyword>
<keyword id="KW-0949">S-adenosyl-L-methionine</keyword>
<keyword id="KW-0808">Transferase</keyword>
<evidence type="ECO:0000250" key="1"/>
<evidence type="ECO:0000255" key="2">
    <source>
        <dbReference type="PROSITE-ProRule" id="PRU00208"/>
    </source>
</evidence>
<evidence type="ECO:0000255" key="3">
    <source>
        <dbReference type="PROSITE-ProRule" id="PRU01024"/>
    </source>
</evidence>
<organism>
    <name type="scientific">Halalkalibacterium halodurans (strain ATCC BAA-125 / DSM 18197 / FERM 7344 / JCM 9153 / C-125)</name>
    <name type="common">Bacillus halodurans</name>
    <dbReference type="NCBI Taxonomy" id="272558"/>
    <lineage>
        <taxon>Bacteria</taxon>
        <taxon>Bacillati</taxon>
        <taxon>Bacillota</taxon>
        <taxon>Bacilli</taxon>
        <taxon>Bacillales</taxon>
        <taxon>Bacillaceae</taxon>
        <taxon>Halalkalibacterium (ex Joshi et al. 2022)</taxon>
    </lineage>
</organism>
<sequence length="463" mass="51935">MTKQATNAVLKKGQRFPLTIKRLGINGEGVGYFKRHVVFVPGALPGEEVVVEVTDVKPRFAEASIRKIRKSSPDRISPPCPVYDQCGGCQLQHLSYEATLKEKREIVKQAFERHTTLRADTLTILPTIGMEDPWAYRNKSQLQLKTEKGQVKAGLYVMNTHKLVDLSSCLVQHDATNEASEVVKQIVQDLQIPTYNERKRTGILRSVVSRVGFETGELQVILVTTKKDFPKKDLLVEEIKSRLPHVKSLQQNINPKKTSLIMGDETISLFGEETIEETLGDISFSLSARAFFQLNPKQTVKLYNEVKRAAALTGKEKVIDAYCGVGTIGLWLADQAREVRGMDVIAEAIEDAKENAKRQGITNVQYEVGKAEKIIPSWVRSSWIPDVIVVDPPRTGCDDQLLKTIKQTKPKRIVYVSCNPSTLAKDVEQLQRSGYKVKNIQPVDMFPWTAQVESCTLLVYEGK</sequence>